<evidence type="ECO:0000250" key="1"/>
<evidence type="ECO:0000250" key="2">
    <source>
        <dbReference type="UniProtKB" id="P37889"/>
    </source>
</evidence>
<evidence type="ECO:0000255" key="3"/>
<evidence type="ECO:0000255" key="4">
    <source>
        <dbReference type="PROSITE-ProRule" id="PRU00022"/>
    </source>
</evidence>
<evidence type="ECO:0000255" key="5">
    <source>
        <dbReference type="PROSITE-ProRule" id="PRU00076"/>
    </source>
</evidence>
<evidence type="ECO:0000256" key="6">
    <source>
        <dbReference type="SAM" id="MobiDB-lite"/>
    </source>
</evidence>
<evidence type="ECO:0000269" key="7">
    <source>
    </source>
</evidence>
<evidence type="ECO:0000269" key="8">
    <source>
    </source>
</evidence>
<evidence type="ECO:0000269" key="9">
    <source>
    </source>
</evidence>
<evidence type="ECO:0000269" key="10">
    <source>
    </source>
</evidence>
<evidence type="ECO:0000269" key="11">
    <source>
    </source>
</evidence>
<evidence type="ECO:0000303" key="12">
    <source>
    </source>
</evidence>
<evidence type="ECO:0000303" key="13">
    <source ref="2"/>
</evidence>
<evidence type="ECO:0000305" key="14"/>
<evidence type="ECO:0007744" key="15">
    <source>
    </source>
</evidence>
<feature type="signal peptide" evidence="3">
    <location>
        <begin position="1"/>
        <end position="27"/>
    </location>
</feature>
<feature type="chain" id="PRO_0000007568" description="Fibulin-2">
    <location>
        <begin position="28"/>
        <end position="1184"/>
    </location>
</feature>
<feature type="domain" description="Anaphylatoxin-like 1" evidence="4">
    <location>
        <begin position="445"/>
        <end position="480"/>
    </location>
</feature>
<feature type="domain" description="Anaphylatoxin-like 2" evidence="4">
    <location>
        <begin position="488"/>
        <end position="519"/>
    </location>
</feature>
<feature type="domain" description="Anaphylatoxin-like 3" evidence="4">
    <location>
        <begin position="521"/>
        <end position="553"/>
    </location>
</feature>
<feature type="domain" description="EGF-like 1; calcium-binding" evidence="5">
    <location>
        <begin position="604"/>
        <end position="645"/>
    </location>
</feature>
<feature type="domain" description="EGF-like 2" evidence="5">
    <location>
        <begin position="679"/>
        <end position="718"/>
    </location>
</feature>
<feature type="domain" description="EGF-like 3; calcium-binding" evidence="5">
    <location>
        <begin position="719"/>
        <end position="763"/>
    </location>
</feature>
<feature type="domain" description="EGF-like 4; calcium-binding" evidence="5">
    <location>
        <begin position="764"/>
        <end position="809"/>
    </location>
</feature>
<feature type="domain" description="EGF-like 5; calcium-binding" evidence="5">
    <location>
        <begin position="810"/>
        <end position="857"/>
    </location>
</feature>
<feature type="domain" description="EGF-like 6; calcium-binding" evidence="5">
    <location>
        <begin position="858"/>
        <end position="900"/>
    </location>
</feature>
<feature type="domain" description="EGF-like 7; calcium-binding" evidence="5">
    <location>
        <begin position="901"/>
        <end position="942"/>
    </location>
</feature>
<feature type="domain" description="EGF-like 8; calcium-binding" evidence="5">
    <location>
        <begin position="943"/>
        <end position="981"/>
    </location>
</feature>
<feature type="domain" description="EGF-like 9; calcium-binding" evidence="5">
    <location>
        <begin position="982"/>
        <end position="1024"/>
    </location>
</feature>
<feature type="domain" description="EGF-like 10; calcium-binding" evidence="5">
    <location>
        <begin position="1025"/>
        <end position="1069"/>
    </location>
</feature>
<feature type="region of interest" description="N">
    <location>
        <begin position="28"/>
        <end position="444"/>
    </location>
</feature>
<feature type="region of interest" description="Subdomain NA (Cys-rich)">
    <location>
        <begin position="28"/>
        <end position="177"/>
    </location>
</feature>
<feature type="region of interest" description="Subdomain NB (Cys-free)">
    <location>
        <begin position="178"/>
        <end position="444"/>
    </location>
</feature>
<feature type="region of interest" description="Disordered" evidence="6">
    <location>
        <begin position="221"/>
        <end position="293"/>
    </location>
</feature>
<feature type="region of interest" description="Disordered" evidence="6">
    <location>
        <begin position="399"/>
        <end position="437"/>
    </location>
</feature>
<feature type="region of interest" description="Domain III">
    <location>
        <begin position="1070"/>
        <end position="1184"/>
    </location>
</feature>
<feature type="compositionally biased region" description="Gly residues" evidence="6">
    <location>
        <begin position="224"/>
        <end position="236"/>
    </location>
</feature>
<feature type="compositionally biased region" description="Low complexity" evidence="6">
    <location>
        <begin position="252"/>
        <end position="261"/>
    </location>
</feature>
<feature type="compositionally biased region" description="Acidic residues" evidence="6">
    <location>
        <begin position="276"/>
        <end position="288"/>
    </location>
</feature>
<feature type="compositionally biased region" description="Polar residues" evidence="6">
    <location>
        <begin position="423"/>
        <end position="436"/>
    </location>
</feature>
<feature type="modified residue" description="Phosphoserine" evidence="15">
    <location>
        <position position="277"/>
    </location>
</feature>
<feature type="glycosylation site" description="N-linked (GlcNAc...) asparagine" evidence="3">
    <location>
        <position position="180"/>
    </location>
</feature>
<feature type="glycosylation site" description="N-linked (GlcNAc...) asparagine" evidence="3">
    <location>
        <position position="507"/>
    </location>
</feature>
<feature type="glycosylation site" description="N-linked (GlcNAc...) asparagine" evidence="8">
    <location>
        <position position="1035"/>
    </location>
</feature>
<feature type="disulfide bond" evidence="1">
    <location>
        <begin position="445"/>
        <end position="472"/>
    </location>
</feature>
<feature type="disulfide bond" evidence="1">
    <location>
        <begin position="446"/>
        <end position="479"/>
    </location>
</feature>
<feature type="disulfide bond" evidence="1">
    <location>
        <begin position="459"/>
        <end position="480"/>
    </location>
</feature>
<feature type="disulfide bond" evidence="1">
    <location>
        <begin position="489"/>
        <end position="518"/>
    </location>
</feature>
<feature type="disulfide bond" evidence="1">
    <location>
        <begin position="502"/>
        <end position="519"/>
    </location>
</feature>
<feature type="disulfide bond" evidence="1">
    <location>
        <begin position="521"/>
        <end position="545"/>
    </location>
</feature>
<feature type="disulfide bond" evidence="1">
    <location>
        <begin position="522"/>
        <end position="552"/>
    </location>
</feature>
<feature type="disulfide bond" evidence="1">
    <location>
        <begin position="535"/>
        <end position="553"/>
    </location>
</feature>
<feature type="disulfide bond" evidence="1">
    <location>
        <begin position="608"/>
        <end position="620"/>
    </location>
</feature>
<feature type="disulfide bond" evidence="1">
    <location>
        <begin position="616"/>
        <end position="629"/>
    </location>
</feature>
<feature type="disulfide bond" evidence="1">
    <location>
        <begin position="631"/>
        <end position="644"/>
    </location>
</feature>
<feature type="disulfide bond" evidence="1">
    <location>
        <begin position="683"/>
        <end position="693"/>
    </location>
</feature>
<feature type="disulfide bond" evidence="1">
    <location>
        <begin position="689"/>
        <end position="702"/>
    </location>
</feature>
<feature type="disulfide bond" evidence="1">
    <location>
        <begin position="704"/>
        <end position="717"/>
    </location>
</feature>
<feature type="disulfide bond" evidence="1">
    <location>
        <begin position="723"/>
        <end position="736"/>
    </location>
</feature>
<feature type="disulfide bond" evidence="1">
    <location>
        <begin position="730"/>
        <end position="745"/>
    </location>
</feature>
<feature type="disulfide bond" evidence="1">
    <location>
        <begin position="751"/>
        <end position="762"/>
    </location>
</feature>
<feature type="disulfide bond" evidence="1">
    <location>
        <begin position="768"/>
        <end position="781"/>
    </location>
</feature>
<feature type="disulfide bond" evidence="1">
    <location>
        <begin position="775"/>
        <end position="790"/>
    </location>
</feature>
<feature type="disulfide bond" evidence="1">
    <location>
        <begin position="796"/>
        <end position="808"/>
    </location>
</feature>
<feature type="disulfide bond" evidence="1">
    <location>
        <begin position="814"/>
        <end position="827"/>
    </location>
</feature>
<feature type="disulfide bond" evidence="1">
    <location>
        <begin position="821"/>
        <end position="836"/>
    </location>
</feature>
<feature type="disulfide bond" evidence="1">
    <location>
        <begin position="843"/>
        <end position="856"/>
    </location>
</feature>
<feature type="disulfide bond" evidence="1">
    <location>
        <begin position="862"/>
        <end position="875"/>
    </location>
</feature>
<feature type="disulfide bond" evidence="1">
    <location>
        <begin position="869"/>
        <end position="884"/>
    </location>
</feature>
<feature type="disulfide bond" evidence="1">
    <location>
        <begin position="886"/>
        <end position="899"/>
    </location>
</feature>
<feature type="disulfide bond" evidence="1">
    <location>
        <begin position="905"/>
        <end position="917"/>
    </location>
</feature>
<feature type="disulfide bond" evidence="1">
    <location>
        <begin position="913"/>
        <end position="926"/>
    </location>
</feature>
<feature type="disulfide bond" evidence="1">
    <location>
        <begin position="928"/>
        <end position="941"/>
    </location>
</feature>
<feature type="disulfide bond" evidence="1">
    <location>
        <begin position="947"/>
        <end position="956"/>
    </location>
</feature>
<feature type="disulfide bond" evidence="1">
    <location>
        <begin position="952"/>
        <end position="965"/>
    </location>
</feature>
<feature type="disulfide bond" evidence="1">
    <location>
        <begin position="967"/>
        <end position="980"/>
    </location>
</feature>
<feature type="disulfide bond" evidence="1">
    <location>
        <begin position="986"/>
        <end position="998"/>
    </location>
</feature>
<feature type="disulfide bond" evidence="1">
    <location>
        <begin position="994"/>
        <end position="1007"/>
    </location>
</feature>
<feature type="disulfide bond" evidence="1">
    <location>
        <begin position="1009"/>
        <end position="1023"/>
    </location>
</feature>
<feature type="disulfide bond" evidence="1">
    <location>
        <begin position="1029"/>
        <end position="1042"/>
    </location>
</feature>
<feature type="disulfide bond" evidence="1">
    <location>
        <begin position="1036"/>
        <end position="1051"/>
    </location>
</feature>
<feature type="disulfide bond" evidence="1">
    <location>
        <begin position="1056"/>
        <end position="1068"/>
    </location>
</feature>
<feature type="splice variant" id="VSP_041404" description="In isoform 2." evidence="12 13">
    <original>E</original>
    <variation>EDQDECLMGAHDCSRRQFCVNTLGSFYCVNHTVLCADGYILNAHRKCV</variation>
    <location>
        <position position="718"/>
    </location>
</feature>
<feature type="sequence variant" id="VAR_061159" description="In dbSNP:rs60850813.">
    <original>I</original>
    <variation>V</variation>
    <location>
        <position position="45"/>
    </location>
</feature>
<feature type="sequence variant" id="VAR_061160" description="In dbSNP:rs28587534.">
    <original>H</original>
    <variation>R</variation>
    <location>
        <position position="144"/>
    </location>
</feature>
<feature type="sequence variant" id="VAR_059266" description="In dbSNP:rs3732666.">
    <original>S</original>
    <variation>G</variation>
    <location>
        <position position="361"/>
    </location>
</feature>
<feature type="sequence variant" id="VAR_059267" description="In dbSNP:rs3796318.">
    <original>N</original>
    <variation>T</variation>
    <location>
        <position position="387"/>
    </location>
</feature>
<feature type="sequence variant" id="VAR_059268" description="In dbSNP:rs9843344." evidence="10">
    <original>T</original>
    <variation>A</variation>
    <location>
        <position position="854"/>
    </location>
</feature>
<feature type="sequence variant" id="VAR_055722" description="In dbSNP:rs1061375.">
    <original>G</original>
    <variation>R</variation>
    <location>
        <position position="1114"/>
    </location>
</feature>
<feature type="sequence conflict" description="In Ref. 1; CAA57876 and 2; AAN05436." evidence="14" ref="1 2">
    <original>K</original>
    <variation>E</variation>
    <location>
        <position position="145"/>
    </location>
</feature>
<feature type="sequence conflict" description="In Ref. 3; BAH14261." evidence="14" ref="3">
    <original>E</original>
    <variation>G</variation>
    <location>
        <position position="664"/>
    </location>
</feature>
<protein>
    <recommendedName>
        <fullName>Fibulin-2</fullName>
        <shortName>FIBL-2</shortName>
    </recommendedName>
</protein>
<gene>
    <name type="primary">FBLN2</name>
</gene>
<organism>
    <name type="scientific">Homo sapiens</name>
    <name type="common">Human</name>
    <dbReference type="NCBI Taxonomy" id="9606"/>
    <lineage>
        <taxon>Eukaryota</taxon>
        <taxon>Metazoa</taxon>
        <taxon>Chordata</taxon>
        <taxon>Craniata</taxon>
        <taxon>Vertebrata</taxon>
        <taxon>Euteleostomi</taxon>
        <taxon>Mammalia</taxon>
        <taxon>Eutheria</taxon>
        <taxon>Euarchontoglires</taxon>
        <taxon>Primates</taxon>
        <taxon>Haplorrhini</taxon>
        <taxon>Catarrhini</taxon>
        <taxon>Hominidae</taxon>
        <taxon>Homo</taxon>
    </lineage>
</organism>
<accession>P98095</accession>
<accession>B7Z9C5</accession>
<accession>Q8IUI0</accession>
<accession>Q8IUI1</accession>
<comment type="function">
    <text evidence="7">Its binding to fibronectin and some other ligands is calcium dependent. May act as an adapter that mediates the interaction between FBN1 and ELN (PubMed:17255108).</text>
</comment>
<comment type="subunit">
    <text evidence="2 7">Homotrimer; disulfide-linked. Interacts with LAMA2 (By similarity). Interacts with FBN1 (via N-terminal domain). Forms a ternary complex with ELN and FBN1 (PubMed:17255108).</text>
</comment>
<comment type="interaction">
    <interactant intactId="EBI-947973">
        <id>P98095</id>
    </interactant>
    <interactant intactId="EBI-747133">
        <id>P27658</id>
        <label>COL8A1</label>
    </interactant>
    <organismsDiffer>false</organismsDiffer>
    <experiments>3</experiments>
</comment>
<comment type="interaction">
    <interactant intactId="EBI-947973">
        <id>P98095</id>
    </interactant>
    <interactant intactId="EBI-741068">
        <id>Q969U6</id>
        <label>FBXW5</label>
    </interactant>
    <organismsDiffer>false</organismsDiffer>
    <experiments>3</experiments>
</comment>
<comment type="interaction">
    <interactant intactId="EBI-947973">
        <id>P98095</id>
    </interactant>
    <interactant intactId="EBI-3918847">
        <id>Q9H2F3</id>
        <label>HSD3B7</label>
    </interactant>
    <organismsDiffer>false</organismsDiffer>
    <experiments>3</experiments>
</comment>
<comment type="interaction">
    <interactant intactId="EBI-947973">
        <id>P98095</id>
    </interactant>
    <interactant intactId="EBI-2510602">
        <id>Q15040</id>
        <label>JOSD1</label>
    </interactant>
    <organismsDiffer>false</organismsDiffer>
    <experiments>3</experiments>
</comment>
<comment type="interaction">
    <interactant intactId="EBI-947973">
        <id>P98095</id>
    </interactant>
    <interactant intactId="EBI-6658837">
        <id>Q9BYE3</id>
        <label>LCE3D</label>
    </interactant>
    <organismsDiffer>false</organismsDiffer>
    <experiments>3</experiments>
</comment>
<comment type="interaction">
    <interactant intactId="EBI-947973">
        <id>P98095</id>
    </interactant>
    <interactant intactId="EBI-740446">
        <id>P32242</id>
        <label>OTX1</label>
    </interactant>
    <organismsDiffer>false</organismsDiffer>
    <experiments>3</experiments>
</comment>
<comment type="interaction">
    <interactant intactId="EBI-947973">
        <id>P98095</id>
    </interactant>
    <interactant intactId="EBI-744257">
        <id>Q96IQ9</id>
        <label>ZNF414</label>
    </interactant>
    <organismsDiffer>false</organismsDiffer>
    <experiments>3</experiments>
</comment>
<comment type="subcellular location">
    <subcellularLocation>
        <location>Secreted</location>
        <location>Extracellular space</location>
        <location>Extracellular matrix</location>
    </subcellularLocation>
</comment>
<comment type="alternative products">
    <event type="alternative splicing"/>
    <isoform>
        <id>P98095-1</id>
        <name>1</name>
        <sequence type="displayed"/>
    </isoform>
    <isoform>
        <id>P98095-2</id>
        <name>2</name>
        <sequence type="described" ref="VSP_041404"/>
    </isoform>
</comment>
<comment type="tissue specificity">
    <text>Component of both basement membranes and other connective tissues. Expressed in heart, placenta and ovary.</text>
</comment>
<comment type="developmental stage">
    <text evidence="11">Widely expressed during embryonic development. Primarily detected within the neuropithelium, spinal ganglia and peripheral nerves.</text>
</comment>
<comment type="PTM">
    <text evidence="8 9">O-glycosylated with core 1 or possibly core 8 glycans. It is unsure if the O-glycosylation is on Thr-347 or Ser-348.</text>
</comment>
<comment type="similarity">
    <text evidence="14">Belongs to the fibulin family.</text>
</comment>
<sequence length="1184" mass="126573">MVLLWEPAGAWLALGLALALGPSVAAAAPRQDCTGVECPPLENCIEEALEPGACCATCVQQGCACEGYQYYDCLQGGFVRGRVPAGQSYFVDFGSTECSCPPGGGKISCQFMLCPELPPNCIEAVVVADSCPQCGQVGCVHAGHKYAAGHTVHLPPCRACHCPDAGGELICYQLPGCHGNFSDAEEGDPERHYEDPYSYDQEVAEVEAATALGGEVQAGAVQAGAGGPPAALGGGSQPLSTIQAPPWPAVLPRPTAAAALGPPAPVQAKARRVTEDSEEEEEEEEEREEMAVTEQLAAGGHRGLDGLPTTAPAGPSLPIQEERAEAGARAEAGARPEENLILDAQATSRSTGPEGVTHAPSLGKAALVPTQAVPGSPRDPVKPSPHNILSTSLPDAAWIPPTREVPRKPQVLPHSHVEEDTDPNSVHSIPRSSPEGSTKDLIETCCAAGQQWAIDNDECLEIPESGTEDNVCRTAQRHCCVSYLQEKSCMAGVLGAKEGETCGAEDNDSCGISLYKQCCDCCGLGLRVRAEGQSCESNPNLGYPCNHVMLSCCEGEEPLIVPEVRRPPEPAAAPRRVSEAEMAGREALSLGTEAELPNSLPGDDQDECLLLPGELCQHLCINTVGSYHCACFPGFSLQDDGRTCRPEGHPPQPEAPQEPALKSEFSQVASNTIPLPLPQPNTCKDNGPCKQVCSTVGGSAICSCFPGYAIMADGVSCEDINECVTDLHTCSRGEHCVNTLGSFHCYKALTCEPGYALKDGECEDVDECAMGTHTCQPGFLCQNTKGSFYCQARQRCMDGFLQDPEGNCVDINECTSLSEPCRPGFSCINTVGSYTCQRNPLICARGYHASDDGTKCVDVNECETGVHRCGEGQVCHNLPGSYRCDCKAGFQRDAFGRGCIDVNECWASPGRLCQHTCENTLGSYRCSCASGFLLAADGKRCEDVNECEAQRCSQECANIYGSYQCYCRQGYQLAEDGHTCTDIDECAQGAGILCTFRCLNVPGSYQCACPEQGYTMTANGRSCKDVDECALGTHNCSEAETCHNIQGSFRCLRFECPPNYVQVSKTKCERTTCHDFLECQNSPARITHYQLNFQTGLLVPAHIFRIGPAPAFTGDTIALNIIKGNEEGYFGTRRLNAYTGVVYLQRAVLEPRDFALDVEMKLWRQGSVTTFLAKMHIFFTTFAL</sequence>
<reference key="1">
    <citation type="journal article" date="1994" name="Genomics">
        <title>Fibulin-2 (FBLN2): human cDNA sequence, mRNA expression, and mapping of the gene on human and mouse chromosomes.</title>
        <authorList>
            <person name="Zhang R.-Z."/>
            <person name="Pan T.-C."/>
            <person name="Zhang Z.-Y."/>
            <person name="Mattei M.-G."/>
            <person name="Timpl R."/>
            <person name="Chu M.-L."/>
        </authorList>
    </citation>
    <scope>NUCLEOTIDE SEQUENCE [MRNA] (ISOFORM 1)</scope>
    <scope>VARIANT ALA-854</scope>
    <source>
        <tissue>Fibroblast</tissue>
    </source>
</reference>
<reference key="2">
    <citation type="submission" date="2002-07" db="EMBL/GenBank/DDBJ databases">
        <title>Identification of a novel alternatively spliced isoform of human fibulin-2 gene abundantly expressed in heart and genetic evaluation in patients with ARVD.</title>
        <authorList>
            <person name="Li D."/>
            <person name="Marian A.J."/>
            <person name="Roberts R."/>
        </authorList>
    </citation>
    <scope>NUCLEOTIDE SEQUENCE [GENOMIC DNA / MRNA] (ISOFORM 2)</scope>
    <scope>ALTERNATIVE SPLICING</scope>
</reference>
<reference key="3">
    <citation type="journal article" date="2004" name="Nat. Genet.">
        <title>Complete sequencing and characterization of 21,243 full-length human cDNAs.</title>
        <authorList>
            <person name="Ota T."/>
            <person name="Suzuki Y."/>
            <person name="Nishikawa T."/>
            <person name="Otsuki T."/>
            <person name="Sugiyama T."/>
            <person name="Irie R."/>
            <person name="Wakamatsu A."/>
            <person name="Hayashi K."/>
            <person name="Sato H."/>
            <person name="Nagai K."/>
            <person name="Kimura K."/>
            <person name="Makita H."/>
            <person name="Sekine M."/>
            <person name="Obayashi M."/>
            <person name="Nishi T."/>
            <person name="Shibahara T."/>
            <person name="Tanaka T."/>
            <person name="Ishii S."/>
            <person name="Yamamoto J."/>
            <person name="Saito K."/>
            <person name="Kawai Y."/>
            <person name="Isono Y."/>
            <person name="Nakamura Y."/>
            <person name="Nagahari K."/>
            <person name="Murakami K."/>
            <person name="Yasuda T."/>
            <person name="Iwayanagi T."/>
            <person name="Wagatsuma M."/>
            <person name="Shiratori A."/>
            <person name="Sudo H."/>
            <person name="Hosoiri T."/>
            <person name="Kaku Y."/>
            <person name="Kodaira H."/>
            <person name="Kondo H."/>
            <person name="Sugawara M."/>
            <person name="Takahashi M."/>
            <person name="Kanda K."/>
            <person name="Yokoi T."/>
            <person name="Furuya T."/>
            <person name="Kikkawa E."/>
            <person name="Omura Y."/>
            <person name="Abe K."/>
            <person name="Kamihara K."/>
            <person name="Katsuta N."/>
            <person name="Sato K."/>
            <person name="Tanikawa M."/>
            <person name="Yamazaki M."/>
            <person name="Ninomiya K."/>
            <person name="Ishibashi T."/>
            <person name="Yamashita H."/>
            <person name="Murakawa K."/>
            <person name="Fujimori K."/>
            <person name="Tanai H."/>
            <person name="Kimata M."/>
            <person name="Watanabe M."/>
            <person name="Hiraoka S."/>
            <person name="Chiba Y."/>
            <person name="Ishida S."/>
            <person name="Ono Y."/>
            <person name="Takiguchi S."/>
            <person name="Watanabe S."/>
            <person name="Yosida M."/>
            <person name="Hotuta T."/>
            <person name="Kusano J."/>
            <person name="Kanehori K."/>
            <person name="Takahashi-Fujii A."/>
            <person name="Hara H."/>
            <person name="Tanase T.-O."/>
            <person name="Nomura Y."/>
            <person name="Togiya S."/>
            <person name="Komai F."/>
            <person name="Hara R."/>
            <person name="Takeuchi K."/>
            <person name="Arita M."/>
            <person name="Imose N."/>
            <person name="Musashino K."/>
            <person name="Yuuki H."/>
            <person name="Oshima A."/>
            <person name="Sasaki N."/>
            <person name="Aotsuka S."/>
            <person name="Yoshikawa Y."/>
            <person name="Matsunawa H."/>
            <person name="Ichihara T."/>
            <person name="Shiohata N."/>
            <person name="Sano S."/>
            <person name="Moriya S."/>
            <person name="Momiyama H."/>
            <person name="Satoh N."/>
            <person name="Takami S."/>
            <person name="Terashima Y."/>
            <person name="Suzuki O."/>
            <person name="Nakagawa S."/>
            <person name="Senoh A."/>
            <person name="Mizoguchi H."/>
            <person name="Goto Y."/>
            <person name="Shimizu F."/>
            <person name="Wakebe H."/>
            <person name="Hishigaki H."/>
            <person name="Watanabe T."/>
            <person name="Sugiyama A."/>
            <person name="Takemoto M."/>
            <person name="Kawakami B."/>
            <person name="Yamazaki M."/>
            <person name="Watanabe K."/>
            <person name="Kumagai A."/>
            <person name="Itakura S."/>
            <person name="Fukuzumi Y."/>
            <person name="Fujimori Y."/>
            <person name="Komiyama M."/>
            <person name="Tashiro H."/>
            <person name="Tanigami A."/>
            <person name="Fujiwara T."/>
            <person name="Ono T."/>
            <person name="Yamada K."/>
            <person name="Fujii Y."/>
            <person name="Ozaki K."/>
            <person name="Hirao M."/>
            <person name="Ohmori Y."/>
            <person name="Kawabata A."/>
            <person name="Hikiji T."/>
            <person name="Kobatake N."/>
            <person name="Inagaki H."/>
            <person name="Ikema Y."/>
            <person name="Okamoto S."/>
            <person name="Okitani R."/>
            <person name="Kawakami T."/>
            <person name="Noguchi S."/>
            <person name="Itoh T."/>
            <person name="Shigeta K."/>
            <person name="Senba T."/>
            <person name="Matsumura K."/>
            <person name="Nakajima Y."/>
            <person name="Mizuno T."/>
            <person name="Morinaga M."/>
            <person name="Sasaki M."/>
            <person name="Togashi T."/>
            <person name="Oyama M."/>
            <person name="Hata H."/>
            <person name="Watanabe M."/>
            <person name="Komatsu T."/>
            <person name="Mizushima-Sugano J."/>
            <person name="Satoh T."/>
            <person name="Shirai Y."/>
            <person name="Takahashi Y."/>
            <person name="Nakagawa K."/>
            <person name="Okumura K."/>
            <person name="Nagase T."/>
            <person name="Nomura N."/>
            <person name="Kikuchi H."/>
            <person name="Masuho Y."/>
            <person name="Yamashita R."/>
            <person name="Nakai K."/>
            <person name="Yada T."/>
            <person name="Nakamura Y."/>
            <person name="Ohara O."/>
            <person name="Isogai T."/>
            <person name="Sugano S."/>
        </authorList>
    </citation>
    <scope>NUCLEOTIDE SEQUENCE [LARGE SCALE MRNA] (ISOFORM 2)</scope>
    <source>
        <tissue>Uterus</tissue>
    </source>
</reference>
<reference key="4">
    <citation type="journal article" date="2006" name="Nature">
        <title>The DNA sequence, annotation and analysis of human chromosome 3.</title>
        <authorList>
            <person name="Muzny D.M."/>
            <person name="Scherer S.E."/>
            <person name="Kaul R."/>
            <person name="Wang J."/>
            <person name="Yu J."/>
            <person name="Sudbrak R."/>
            <person name="Buhay C.J."/>
            <person name="Chen R."/>
            <person name="Cree A."/>
            <person name="Ding Y."/>
            <person name="Dugan-Rocha S."/>
            <person name="Gill R."/>
            <person name="Gunaratne P."/>
            <person name="Harris R.A."/>
            <person name="Hawes A.C."/>
            <person name="Hernandez J."/>
            <person name="Hodgson A.V."/>
            <person name="Hume J."/>
            <person name="Jackson A."/>
            <person name="Khan Z.M."/>
            <person name="Kovar-Smith C."/>
            <person name="Lewis L.R."/>
            <person name="Lozado R.J."/>
            <person name="Metzker M.L."/>
            <person name="Milosavljevic A."/>
            <person name="Miner G.R."/>
            <person name="Morgan M.B."/>
            <person name="Nazareth L.V."/>
            <person name="Scott G."/>
            <person name="Sodergren E."/>
            <person name="Song X.-Z."/>
            <person name="Steffen D."/>
            <person name="Wei S."/>
            <person name="Wheeler D.A."/>
            <person name="Wright M.W."/>
            <person name="Worley K.C."/>
            <person name="Yuan Y."/>
            <person name="Zhang Z."/>
            <person name="Adams C.Q."/>
            <person name="Ansari-Lari M.A."/>
            <person name="Ayele M."/>
            <person name="Brown M.J."/>
            <person name="Chen G."/>
            <person name="Chen Z."/>
            <person name="Clendenning J."/>
            <person name="Clerc-Blankenburg K.P."/>
            <person name="Chen R."/>
            <person name="Chen Z."/>
            <person name="Davis C."/>
            <person name="Delgado O."/>
            <person name="Dinh H.H."/>
            <person name="Dong W."/>
            <person name="Draper H."/>
            <person name="Ernst S."/>
            <person name="Fu G."/>
            <person name="Gonzalez-Garay M.L."/>
            <person name="Garcia D.K."/>
            <person name="Gillett W."/>
            <person name="Gu J."/>
            <person name="Hao B."/>
            <person name="Haugen E."/>
            <person name="Havlak P."/>
            <person name="He X."/>
            <person name="Hennig S."/>
            <person name="Hu S."/>
            <person name="Huang W."/>
            <person name="Jackson L.R."/>
            <person name="Jacob L.S."/>
            <person name="Kelly S.H."/>
            <person name="Kube M."/>
            <person name="Levy R."/>
            <person name="Li Z."/>
            <person name="Liu B."/>
            <person name="Liu J."/>
            <person name="Liu W."/>
            <person name="Lu J."/>
            <person name="Maheshwari M."/>
            <person name="Nguyen B.-V."/>
            <person name="Okwuonu G.O."/>
            <person name="Palmeiri A."/>
            <person name="Pasternak S."/>
            <person name="Perez L.M."/>
            <person name="Phelps K.A."/>
            <person name="Plopper F.J."/>
            <person name="Qiang B."/>
            <person name="Raymond C."/>
            <person name="Rodriguez R."/>
            <person name="Saenphimmachak C."/>
            <person name="Santibanez J."/>
            <person name="Shen H."/>
            <person name="Shen Y."/>
            <person name="Subramanian S."/>
            <person name="Tabor P.E."/>
            <person name="Verduzco D."/>
            <person name="Waldron L."/>
            <person name="Wang J."/>
            <person name="Wang J."/>
            <person name="Wang Q."/>
            <person name="Williams G.A."/>
            <person name="Wong G.K.-S."/>
            <person name="Yao Z."/>
            <person name="Zhang J."/>
            <person name="Zhang X."/>
            <person name="Zhao G."/>
            <person name="Zhou J."/>
            <person name="Zhou Y."/>
            <person name="Nelson D."/>
            <person name="Lehrach H."/>
            <person name="Reinhardt R."/>
            <person name="Naylor S.L."/>
            <person name="Yang H."/>
            <person name="Olson M."/>
            <person name="Weinstock G."/>
            <person name="Gibbs R.A."/>
        </authorList>
    </citation>
    <scope>NUCLEOTIDE SEQUENCE [LARGE SCALE GENOMIC DNA]</scope>
</reference>
<reference key="5">
    <citation type="journal article" date="1996" name="Histochem. J.">
        <title>The extracellular matrix proteins fibulin-1 and fibulin-2 in the early human embryo.</title>
        <authorList>
            <person name="Miosge N."/>
            <person name="Gotz W."/>
            <person name="Sasaki T."/>
            <person name="Chu M.-L."/>
            <person name="Timpl R."/>
            <person name="Herken R."/>
        </authorList>
    </citation>
    <scope>DEVELOPMENTAL STAGE</scope>
</reference>
<reference key="6">
    <citation type="journal article" date="2007" name="J. Biol. Chem.">
        <title>Fibrillin-1 interactions with fibulins depend on the first hybrid domain and provide an adaptor function to tropoelastin.</title>
        <authorList>
            <person name="El-Hallous E."/>
            <person name="Sasaki T."/>
            <person name="Hubmacher D."/>
            <person name="Getie M."/>
            <person name="Tiedemann K."/>
            <person name="Brinckmann J."/>
            <person name="Baetge B."/>
            <person name="Davis E.C."/>
            <person name="Reinhardt D.P."/>
        </authorList>
    </citation>
    <scope>FUNCTION</scope>
    <scope>INTERACTION WITH FBN1 AND ELN</scope>
</reference>
<reference key="7">
    <citation type="journal article" date="2008" name="Proteomics">
        <title>Large-scale phosphoproteome analysis of human liver tissue by enrichment and fractionation of phosphopeptides with strong anion exchange chromatography.</title>
        <authorList>
            <person name="Han G."/>
            <person name="Ye M."/>
            <person name="Zhou H."/>
            <person name="Jiang X."/>
            <person name="Feng S."/>
            <person name="Jiang X."/>
            <person name="Tian R."/>
            <person name="Wan D."/>
            <person name="Zou H."/>
            <person name="Gu J."/>
        </authorList>
    </citation>
    <scope>PHOSPHORYLATION [LARGE SCALE ANALYSIS] AT SER-277</scope>
    <scope>IDENTIFICATION BY MASS SPECTROMETRY [LARGE SCALE ANALYSIS]</scope>
    <source>
        <tissue>Liver</tissue>
    </source>
</reference>
<reference key="8">
    <citation type="journal article" date="2009" name="J. Proteome Res.">
        <title>Glycoproteomics analysis of human liver tissue by combination of multiple enzyme digestion and hydrazide chemistry.</title>
        <authorList>
            <person name="Chen R."/>
            <person name="Jiang X."/>
            <person name="Sun D."/>
            <person name="Han G."/>
            <person name="Wang F."/>
            <person name="Ye M."/>
            <person name="Wang L."/>
            <person name="Zou H."/>
        </authorList>
    </citation>
    <scope>GLYCOSYLATION [LARGE SCALE ANALYSIS] AT ASN-1035</scope>
    <source>
        <tissue>Liver</tissue>
    </source>
</reference>
<reference key="9">
    <citation type="journal article" date="2012" name="Mol. Cell. Proteomics">
        <title>Human urinary glycoproteomics; attachment site specific analysis of N- and O-linked glycosylations by CID and ECD.</title>
        <authorList>
            <person name="Halim A."/>
            <person name="Nilsson J."/>
            <person name="Ruetschi U."/>
            <person name="Hesse C."/>
            <person name="Larson G."/>
        </authorList>
    </citation>
    <scope>GLYCOSYLATION</scope>
    <scope>STRUCTURE OF CARBOHYDRATES</scope>
    <scope>IDENTIFICATION BY MASS SPECTROMETRY</scope>
</reference>
<proteinExistence type="evidence at protein level"/>
<dbReference type="EMBL" id="X82494">
    <property type="protein sequence ID" value="CAA57876.1"/>
    <property type="molecule type" value="mRNA"/>
</dbReference>
<dbReference type="EMBL" id="AY130458">
    <property type="protein sequence ID" value="AAN05435.1"/>
    <property type="molecule type" value="Genomic_DNA"/>
</dbReference>
<dbReference type="EMBL" id="AY130456">
    <property type="protein sequence ID" value="AAN05435.1"/>
    <property type="status" value="JOINED"/>
    <property type="molecule type" value="Genomic_DNA"/>
</dbReference>
<dbReference type="EMBL" id="AY130457">
    <property type="protein sequence ID" value="AAN05435.1"/>
    <property type="status" value="JOINED"/>
    <property type="molecule type" value="Genomic_DNA"/>
</dbReference>
<dbReference type="EMBL" id="AY130459">
    <property type="protein sequence ID" value="AAN05436.1"/>
    <property type="molecule type" value="mRNA"/>
</dbReference>
<dbReference type="EMBL" id="AK304827">
    <property type="protein sequence ID" value="BAH14261.1"/>
    <property type="molecule type" value="mRNA"/>
</dbReference>
<dbReference type="EMBL" id="AC090509">
    <property type="status" value="NOT_ANNOTATED_CDS"/>
    <property type="molecule type" value="Genomic_DNA"/>
</dbReference>
<dbReference type="CCDS" id="CCDS46761.1">
    <molecule id="P98095-2"/>
</dbReference>
<dbReference type="CCDS" id="CCDS46762.1">
    <molecule id="P98095-1"/>
</dbReference>
<dbReference type="PIR" id="A55184">
    <property type="entry name" value="A55184"/>
</dbReference>
<dbReference type="RefSeq" id="NP_001004019.1">
    <molecule id="P98095-2"/>
    <property type="nucleotide sequence ID" value="NM_001004019.2"/>
</dbReference>
<dbReference type="RefSeq" id="NP_001158507.1">
    <molecule id="P98095-2"/>
    <property type="nucleotide sequence ID" value="NM_001165035.2"/>
</dbReference>
<dbReference type="RefSeq" id="NP_001989.2">
    <molecule id="P98095-1"/>
    <property type="nucleotide sequence ID" value="NM_001998.3"/>
</dbReference>
<dbReference type="BioGRID" id="108493">
    <property type="interactions" value="54"/>
</dbReference>
<dbReference type="CORUM" id="P98095"/>
<dbReference type="FunCoup" id="P98095">
    <property type="interactions" value="136"/>
</dbReference>
<dbReference type="IntAct" id="P98095">
    <property type="interactions" value="45"/>
</dbReference>
<dbReference type="MINT" id="P98095"/>
<dbReference type="STRING" id="9606.ENSP00000384169"/>
<dbReference type="GlyConnect" id="751">
    <property type="glycosylation" value="8 N-Linked glycans (2 sites)"/>
</dbReference>
<dbReference type="GlyCosmos" id="P98095">
    <property type="glycosylation" value="19 sites, 12 glycans"/>
</dbReference>
<dbReference type="GlyGen" id="P98095">
    <property type="glycosylation" value="22 sites, 30 N-linked glycans (3 sites), 7 O-linked glycans (19 sites)"/>
</dbReference>
<dbReference type="iPTMnet" id="P98095"/>
<dbReference type="PhosphoSitePlus" id="P98095"/>
<dbReference type="BioMuta" id="FBLN2"/>
<dbReference type="DMDM" id="224471827"/>
<dbReference type="jPOST" id="P98095"/>
<dbReference type="MassIVE" id="P98095"/>
<dbReference type="PaxDb" id="9606-ENSP00000384169"/>
<dbReference type="PeptideAtlas" id="P98095"/>
<dbReference type="ProteomicsDB" id="57790">
    <molecule id="P98095-1"/>
</dbReference>
<dbReference type="ProteomicsDB" id="57791">
    <molecule id="P98095-2"/>
</dbReference>
<dbReference type="Antibodypedia" id="1165">
    <property type="antibodies" value="269 antibodies from 32 providers"/>
</dbReference>
<dbReference type="DNASU" id="2199"/>
<dbReference type="Ensembl" id="ENST00000295760.11">
    <molecule id="P98095-1"/>
    <property type="protein sequence ID" value="ENSP00000295760.7"/>
    <property type="gene ID" value="ENSG00000163520.14"/>
</dbReference>
<dbReference type="Ensembl" id="ENST00000404922.8">
    <molecule id="P98095-2"/>
    <property type="protein sequence ID" value="ENSP00000384169.3"/>
    <property type="gene ID" value="ENSG00000163520.14"/>
</dbReference>
<dbReference type="Ensembl" id="ENST00000492059.5">
    <molecule id="P98095-2"/>
    <property type="protein sequence ID" value="ENSP00000420042.1"/>
    <property type="gene ID" value="ENSG00000163520.14"/>
</dbReference>
<dbReference type="GeneID" id="2199"/>
<dbReference type="KEGG" id="hsa:2199"/>
<dbReference type="MANE-Select" id="ENST00000404922.8">
    <molecule id="P98095-2"/>
    <property type="protein sequence ID" value="ENSP00000384169.3"/>
    <property type="RefSeq nucleotide sequence ID" value="NM_001004019.2"/>
    <property type="RefSeq protein sequence ID" value="NP_001004019.1"/>
</dbReference>
<dbReference type="UCSC" id="uc011ava.3">
    <molecule id="P98095-1"/>
    <property type="organism name" value="human"/>
</dbReference>
<dbReference type="AGR" id="HGNC:3601"/>
<dbReference type="CTD" id="2199"/>
<dbReference type="DisGeNET" id="2199"/>
<dbReference type="GeneCards" id="FBLN2"/>
<dbReference type="HGNC" id="HGNC:3601">
    <property type="gene designation" value="FBLN2"/>
</dbReference>
<dbReference type="HPA" id="ENSG00000163520">
    <property type="expression patterns" value="Tissue enhanced (heart)"/>
</dbReference>
<dbReference type="MIM" id="135821">
    <property type="type" value="gene"/>
</dbReference>
<dbReference type="neXtProt" id="NX_P98095"/>
<dbReference type="OpenTargets" id="ENSG00000163520"/>
<dbReference type="PharmGKB" id="PA28014"/>
<dbReference type="VEuPathDB" id="HostDB:ENSG00000163520"/>
<dbReference type="eggNOG" id="KOG1217">
    <property type="taxonomic scope" value="Eukaryota"/>
</dbReference>
<dbReference type="GeneTree" id="ENSGT00940000156047"/>
<dbReference type="HOGENOM" id="CLU_268948_0_0_1"/>
<dbReference type="InParanoid" id="P98095"/>
<dbReference type="OMA" id="MNTCRDI"/>
<dbReference type="OrthoDB" id="4062651at2759"/>
<dbReference type="PAN-GO" id="P98095">
    <property type="GO annotations" value="2 GO annotations based on evolutionary models"/>
</dbReference>
<dbReference type="PhylomeDB" id="P98095"/>
<dbReference type="TreeFam" id="TF317514"/>
<dbReference type="PathwayCommons" id="P98095"/>
<dbReference type="Reactome" id="R-HSA-2129379">
    <property type="pathway name" value="Molecules associated with elastic fibres"/>
</dbReference>
<dbReference type="SignaLink" id="P98095"/>
<dbReference type="BioGRID-ORCS" id="2199">
    <property type="hits" value="7 hits in 1152 CRISPR screens"/>
</dbReference>
<dbReference type="ChiTaRS" id="FBLN2">
    <property type="organism name" value="human"/>
</dbReference>
<dbReference type="GeneWiki" id="FBLN2"/>
<dbReference type="GenomeRNAi" id="2199"/>
<dbReference type="Pharos" id="P98095">
    <property type="development level" value="Tbio"/>
</dbReference>
<dbReference type="PRO" id="PR:P98095"/>
<dbReference type="Proteomes" id="UP000005640">
    <property type="component" value="Chromosome 3"/>
</dbReference>
<dbReference type="RNAct" id="P98095">
    <property type="molecule type" value="protein"/>
</dbReference>
<dbReference type="Bgee" id="ENSG00000163520">
    <property type="expression patterns" value="Expressed in right atrium auricular region and 161 other cell types or tissues"/>
</dbReference>
<dbReference type="ExpressionAtlas" id="P98095">
    <property type="expression patterns" value="baseline and differential"/>
</dbReference>
<dbReference type="GO" id="GO:0062023">
    <property type="term" value="C:collagen-containing extracellular matrix"/>
    <property type="evidence" value="ECO:0007005"/>
    <property type="project" value="UniProtKB"/>
</dbReference>
<dbReference type="GO" id="GO:0031012">
    <property type="term" value="C:extracellular matrix"/>
    <property type="evidence" value="ECO:0000304"/>
    <property type="project" value="ProtInc"/>
</dbReference>
<dbReference type="GO" id="GO:0005576">
    <property type="term" value="C:extracellular region"/>
    <property type="evidence" value="ECO:0007005"/>
    <property type="project" value="BHF-UCL"/>
</dbReference>
<dbReference type="GO" id="GO:1903561">
    <property type="term" value="C:extracellular vesicle"/>
    <property type="evidence" value="ECO:0007005"/>
    <property type="project" value="UniProtKB"/>
</dbReference>
<dbReference type="GO" id="GO:0005509">
    <property type="term" value="F:calcium ion binding"/>
    <property type="evidence" value="ECO:0000304"/>
    <property type="project" value="ProtInc"/>
</dbReference>
<dbReference type="GO" id="GO:0050840">
    <property type="term" value="F:extracellular matrix binding"/>
    <property type="evidence" value="ECO:0000318"/>
    <property type="project" value="GO_Central"/>
</dbReference>
<dbReference type="GO" id="GO:0030023">
    <property type="term" value="F:extracellular matrix constituent conferring elasticity"/>
    <property type="evidence" value="ECO:0000250"/>
    <property type="project" value="BHF-UCL"/>
</dbReference>
<dbReference type="GO" id="GO:0005201">
    <property type="term" value="F:extracellular matrix structural constituent"/>
    <property type="evidence" value="ECO:0000304"/>
    <property type="project" value="ProtInc"/>
</dbReference>
<dbReference type="GO" id="GO:0010811">
    <property type="term" value="P:positive regulation of cell-substrate adhesion"/>
    <property type="evidence" value="ECO:0000318"/>
    <property type="project" value="GO_Central"/>
</dbReference>
<dbReference type="CDD" id="cd00017">
    <property type="entry name" value="ANATO"/>
    <property type="match status" value="2"/>
</dbReference>
<dbReference type="CDD" id="cd00054">
    <property type="entry name" value="EGF_CA"/>
    <property type="match status" value="7"/>
</dbReference>
<dbReference type="FunFam" id="2.10.25.10:FF:000324">
    <property type="entry name" value="Fibulin 2"/>
    <property type="match status" value="1"/>
</dbReference>
<dbReference type="FunFam" id="2.10.25.10:FF:000341">
    <property type="entry name" value="Fibulin 2"/>
    <property type="match status" value="1"/>
</dbReference>
<dbReference type="FunFam" id="2.10.25.10:FF:000564">
    <property type="entry name" value="Fibulin 2"/>
    <property type="match status" value="1"/>
</dbReference>
<dbReference type="FunFam" id="2.10.25.10:FF:000578">
    <property type="entry name" value="Fibulin 2"/>
    <property type="match status" value="1"/>
</dbReference>
<dbReference type="FunFam" id="2.10.25.10:FF:000078">
    <property type="entry name" value="Fibulin-1"/>
    <property type="match status" value="2"/>
</dbReference>
<dbReference type="FunFam" id="2.10.25.10:FF:000108">
    <property type="entry name" value="Fibulin-1"/>
    <property type="match status" value="1"/>
</dbReference>
<dbReference type="FunFam" id="2.10.25.10:FF:000139">
    <property type="entry name" value="Fibulin-1"/>
    <property type="match status" value="1"/>
</dbReference>
<dbReference type="FunFam" id="2.10.25.10:FF:000010">
    <property type="entry name" value="Pro-epidermal growth factor"/>
    <property type="match status" value="2"/>
</dbReference>
<dbReference type="Gene3D" id="2.10.25.10">
    <property type="entry name" value="Laminin"/>
    <property type="match status" value="10"/>
</dbReference>
<dbReference type="InterPro" id="IPR000020">
    <property type="entry name" value="Anaphylatoxin/fibulin"/>
</dbReference>
<dbReference type="InterPro" id="IPR026823">
    <property type="entry name" value="cEGF"/>
</dbReference>
<dbReference type="InterPro" id="IPR050751">
    <property type="entry name" value="ECM_structural_protein"/>
</dbReference>
<dbReference type="InterPro" id="IPR001881">
    <property type="entry name" value="EGF-like_Ca-bd_dom"/>
</dbReference>
<dbReference type="InterPro" id="IPR000742">
    <property type="entry name" value="EGF-like_dom"/>
</dbReference>
<dbReference type="InterPro" id="IPR000152">
    <property type="entry name" value="EGF-type_Asp/Asn_hydroxyl_site"/>
</dbReference>
<dbReference type="InterPro" id="IPR018097">
    <property type="entry name" value="EGF_Ca-bd_CS"/>
</dbReference>
<dbReference type="InterPro" id="IPR056612">
    <property type="entry name" value="FIBL-2_dom"/>
</dbReference>
<dbReference type="InterPro" id="IPR055088">
    <property type="entry name" value="Fibulin_C"/>
</dbReference>
<dbReference type="InterPro" id="IPR009030">
    <property type="entry name" value="Growth_fac_rcpt_cys_sf"/>
</dbReference>
<dbReference type="InterPro" id="IPR049883">
    <property type="entry name" value="NOTCH1_EGF-like"/>
</dbReference>
<dbReference type="PANTHER" id="PTHR24034">
    <property type="entry name" value="EGF-LIKE DOMAIN-CONTAINING PROTEIN"/>
    <property type="match status" value="1"/>
</dbReference>
<dbReference type="PANTHER" id="PTHR24034:SF209">
    <property type="entry name" value="EGF-LIKE DOMAIN-CONTAINING PROTEIN"/>
    <property type="match status" value="1"/>
</dbReference>
<dbReference type="Pfam" id="PF01821">
    <property type="entry name" value="ANATO"/>
    <property type="match status" value="2"/>
</dbReference>
<dbReference type="Pfam" id="PF12662">
    <property type="entry name" value="cEGF"/>
    <property type="match status" value="2"/>
</dbReference>
<dbReference type="Pfam" id="PF07645">
    <property type="entry name" value="EGF_CA"/>
    <property type="match status" value="5"/>
</dbReference>
<dbReference type="Pfam" id="PF24532">
    <property type="entry name" value="FIBL-2"/>
    <property type="match status" value="1"/>
</dbReference>
<dbReference type="Pfam" id="PF22914">
    <property type="entry name" value="Fibulin_C"/>
    <property type="match status" value="1"/>
</dbReference>
<dbReference type="Pfam" id="PF14670">
    <property type="entry name" value="FXa_inhibition"/>
    <property type="match status" value="1"/>
</dbReference>
<dbReference type="SMART" id="SM00104">
    <property type="entry name" value="ANATO"/>
    <property type="match status" value="3"/>
</dbReference>
<dbReference type="SMART" id="SM00181">
    <property type="entry name" value="EGF"/>
    <property type="match status" value="11"/>
</dbReference>
<dbReference type="SMART" id="SM00179">
    <property type="entry name" value="EGF_CA"/>
    <property type="match status" value="9"/>
</dbReference>
<dbReference type="SUPFAM" id="SSF57196">
    <property type="entry name" value="EGF/Laminin"/>
    <property type="match status" value="2"/>
</dbReference>
<dbReference type="SUPFAM" id="SSF57184">
    <property type="entry name" value="Growth factor receptor domain"/>
    <property type="match status" value="4"/>
</dbReference>
<dbReference type="PROSITE" id="PS01177">
    <property type="entry name" value="ANAPHYLATOXIN_1"/>
    <property type="match status" value="3"/>
</dbReference>
<dbReference type="PROSITE" id="PS01178">
    <property type="entry name" value="ANAPHYLATOXIN_2"/>
    <property type="match status" value="3"/>
</dbReference>
<dbReference type="PROSITE" id="PS00010">
    <property type="entry name" value="ASX_HYDROXYL"/>
    <property type="match status" value="5"/>
</dbReference>
<dbReference type="PROSITE" id="PS01186">
    <property type="entry name" value="EGF_2"/>
    <property type="match status" value="5"/>
</dbReference>
<dbReference type="PROSITE" id="PS50026">
    <property type="entry name" value="EGF_3"/>
    <property type="match status" value="4"/>
</dbReference>
<dbReference type="PROSITE" id="PS01187">
    <property type="entry name" value="EGF_CA"/>
    <property type="match status" value="9"/>
</dbReference>
<name>FBLN2_HUMAN</name>
<keyword id="KW-0025">Alternative splicing</keyword>
<keyword id="KW-0106">Calcium</keyword>
<keyword id="KW-1015">Disulfide bond</keyword>
<keyword id="KW-0245">EGF-like domain</keyword>
<keyword id="KW-0272">Extracellular matrix</keyword>
<keyword id="KW-0325">Glycoprotein</keyword>
<keyword id="KW-0597">Phosphoprotein</keyword>
<keyword id="KW-1267">Proteomics identification</keyword>
<keyword id="KW-1185">Reference proteome</keyword>
<keyword id="KW-0677">Repeat</keyword>
<keyword id="KW-0964">Secreted</keyword>
<keyword id="KW-0732">Signal</keyword>